<keyword id="KW-0997">Cell inner membrane</keyword>
<keyword id="KW-1003">Cell membrane</keyword>
<keyword id="KW-0406">Ion transport</keyword>
<keyword id="KW-0472">Membrane</keyword>
<keyword id="KW-0915">Sodium</keyword>
<keyword id="KW-0739">Sodium transport</keyword>
<keyword id="KW-0769">Symport</keyword>
<keyword id="KW-0812">Transmembrane</keyword>
<keyword id="KW-1133">Transmembrane helix</keyword>
<keyword id="KW-0813">Transport</keyword>
<name>ACTP_KLEP3</name>
<proteinExistence type="inferred from homology"/>
<sequence length="551" mass="59125">MIKRVLTALAATLLPLGAHAADAITGAVQRQPTNWQAIVMFLIFVALTLYITYWASKRVRSRSDYYTAGGNITGFQNGLAIAGDFMSAASFLGISALVYTSGYDGLIYSLGFLVGWPIILFLIAERLRNLGRYTFADVASYRLKQGPIRTLSACGSLVVVALYLIAQMVGAGKLIQLLFGLNYHVAVVLVGVLMVLYVLFGGMLATTWVQIIKAVLLLCGASFMAFMVMKHVGFSFNNLFTEAMAVHPKGAAIMSPGGLVKDPISALSLGLGLMFGTAGLPHILMRFFTVSDAKEARKSVFYATGFMGYFYILTFIIGFGAIMLVGANPAFKDAAGQLIGGNNMAAVHLADAVGGNLFLGFISAVAFATILAVVAGLTLAGASAVSHDLYANVFRKGATERQELKVSKITVLILGVVAILLGILFENQNIAFMVGLAFSIAASCNFPIILLSMYWSKLTTRGAMVGGWLGLLTAVILMILGPTIWVQILGHEKALFPYEYPALFSIAIAFIGIWVFSATDNSPEGMREREQFRAQFIRSQTGIGIERGQAH</sequence>
<gene>
    <name evidence="1" type="primary">actP</name>
    <name type="ordered locus">KPK_5193</name>
</gene>
<comment type="function">
    <text evidence="1">Transports acetate.</text>
</comment>
<comment type="subcellular location">
    <subcellularLocation>
        <location evidence="1">Cell inner membrane</location>
        <topology evidence="1">Multi-pass membrane protein</topology>
    </subcellularLocation>
</comment>
<comment type="similarity">
    <text evidence="1">Belongs to the sodium:solute symporter (SSF) (TC 2.A.21) family.</text>
</comment>
<dbReference type="EMBL" id="CP000964">
    <property type="protein sequence ID" value="ACI06802.1"/>
    <property type="molecule type" value="Genomic_DNA"/>
</dbReference>
<dbReference type="SMR" id="B5XXT7"/>
<dbReference type="KEGG" id="kpe:KPK_5193"/>
<dbReference type="HOGENOM" id="CLU_018808_8_3_6"/>
<dbReference type="Proteomes" id="UP000001734">
    <property type="component" value="Chromosome"/>
</dbReference>
<dbReference type="GO" id="GO:0005886">
    <property type="term" value="C:plasma membrane"/>
    <property type="evidence" value="ECO:0007669"/>
    <property type="project" value="UniProtKB-SubCell"/>
</dbReference>
<dbReference type="GO" id="GO:0015123">
    <property type="term" value="F:acetate transmembrane transporter activity"/>
    <property type="evidence" value="ECO:0007669"/>
    <property type="project" value="UniProtKB-UniRule"/>
</dbReference>
<dbReference type="GO" id="GO:0043879">
    <property type="term" value="F:glycolate transmembrane transporter activity"/>
    <property type="evidence" value="ECO:0007669"/>
    <property type="project" value="InterPro"/>
</dbReference>
<dbReference type="GO" id="GO:0015293">
    <property type="term" value="F:symporter activity"/>
    <property type="evidence" value="ECO:0007669"/>
    <property type="project" value="UniProtKB-KW"/>
</dbReference>
<dbReference type="GO" id="GO:0006847">
    <property type="term" value="P:plasma membrane acetate transport"/>
    <property type="evidence" value="ECO:0007669"/>
    <property type="project" value="TreeGrafter"/>
</dbReference>
<dbReference type="GO" id="GO:0006814">
    <property type="term" value="P:sodium ion transport"/>
    <property type="evidence" value="ECO:0007669"/>
    <property type="project" value="UniProtKB-KW"/>
</dbReference>
<dbReference type="CDD" id="cd11480">
    <property type="entry name" value="SLC5sbd_u4"/>
    <property type="match status" value="1"/>
</dbReference>
<dbReference type="FunFam" id="1.20.1730.10:FF:000001">
    <property type="entry name" value="Cation/acetate symporter ActP"/>
    <property type="match status" value="1"/>
</dbReference>
<dbReference type="Gene3D" id="1.20.1730.10">
    <property type="entry name" value="Sodium/glucose cotransporter"/>
    <property type="match status" value="1"/>
</dbReference>
<dbReference type="HAMAP" id="MF_01426">
    <property type="entry name" value="Acet_symport_ActP"/>
    <property type="match status" value="1"/>
</dbReference>
<dbReference type="InterPro" id="IPR014083">
    <property type="entry name" value="Cation/Ac_symporter_ActP"/>
</dbReference>
<dbReference type="InterPro" id="IPR038377">
    <property type="entry name" value="Na/Glc_symporter_sf"/>
</dbReference>
<dbReference type="InterPro" id="IPR001734">
    <property type="entry name" value="Na/solute_symporter"/>
</dbReference>
<dbReference type="InterPro" id="IPR018212">
    <property type="entry name" value="Na/solute_symporter_CS"/>
</dbReference>
<dbReference type="InterPro" id="IPR050277">
    <property type="entry name" value="Sodium:Solute_Symporter"/>
</dbReference>
<dbReference type="NCBIfam" id="NF006903">
    <property type="entry name" value="PRK09395.1"/>
    <property type="match status" value="1"/>
</dbReference>
<dbReference type="NCBIfam" id="NF009135">
    <property type="entry name" value="PRK12488.1"/>
    <property type="match status" value="1"/>
</dbReference>
<dbReference type="NCBIfam" id="TIGR00813">
    <property type="entry name" value="sss"/>
    <property type="match status" value="1"/>
</dbReference>
<dbReference type="NCBIfam" id="TIGR02711">
    <property type="entry name" value="symport_actP"/>
    <property type="match status" value="1"/>
</dbReference>
<dbReference type="PANTHER" id="PTHR48086:SF6">
    <property type="entry name" value="CATION_ACETATE SYMPORTER ACTP"/>
    <property type="match status" value="1"/>
</dbReference>
<dbReference type="PANTHER" id="PTHR48086">
    <property type="entry name" value="SODIUM/PROLINE SYMPORTER-RELATED"/>
    <property type="match status" value="1"/>
</dbReference>
<dbReference type="Pfam" id="PF00474">
    <property type="entry name" value="SSF"/>
    <property type="match status" value="1"/>
</dbReference>
<dbReference type="PROSITE" id="PS00456">
    <property type="entry name" value="NA_SOLUT_SYMP_1"/>
    <property type="match status" value="1"/>
</dbReference>
<dbReference type="PROSITE" id="PS00457">
    <property type="entry name" value="NA_SOLUT_SYMP_2"/>
    <property type="match status" value="1"/>
</dbReference>
<dbReference type="PROSITE" id="PS50283">
    <property type="entry name" value="NA_SOLUT_SYMP_3"/>
    <property type="match status" value="1"/>
</dbReference>
<feature type="chain" id="PRO_1000145721" description="Cation/acetate symporter ActP">
    <location>
        <begin position="1"/>
        <end position="551"/>
    </location>
</feature>
<feature type="transmembrane region" description="Helical" evidence="1">
    <location>
        <begin position="8"/>
        <end position="28"/>
    </location>
</feature>
<feature type="transmembrane region" description="Helical" evidence="1">
    <location>
        <begin position="35"/>
        <end position="55"/>
    </location>
</feature>
<feature type="transmembrane region" description="Helical" evidence="1">
    <location>
        <begin position="78"/>
        <end position="98"/>
    </location>
</feature>
<feature type="transmembrane region" description="Helical" evidence="1">
    <location>
        <begin position="105"/>
        <end position="125"/>
    </location>
</feature>
<feature type="transmembrane region" description="Helical" evidence="1">
    <location>
        <begin position="151"/>
        <end position="171"/>
    </location>
</feature>
<feature type="transmembrane region" description="Helical" evidence="1">
    <location>
        <begin position="185"/>
        <end position="205"/>
    </location>
</feature>
<feature type="transmembrane region" description="Helical" evidence="1">
    <location>
        <begin position="208"/>
        <end position="228"/>
    </location>
</feature>
<feature type="transmembrane region" description="Helical" evidence="1">
    <location>
        <begin position="264"/>
        <end position="284"/>
    </location>
</feature>
<feature type="transmembrane region" description="Helical" evidence="1">
    <location>
        <begin position="305"/>
        <end position="325"/>
    </location>
</feature>
<feature type="transmembrane region" description="Helical" evidence="1">
    <location>
        <begin position="357"/>
        <end position="377"/>
    </location>
</feature>
<feature type="transmembrane region" description="Helical" evidence="1">
    <location>
        <begin position="406"/>
        <end position="426"/>
    </location>
</feature>
<feature type="transmembrane region" description="Helical" evidence="1">
    <location>
        <begin position="430"/>
        <end position="450"/>
    </location>
</feature>
<feature type="transmembrane region" description="Helical" evidence="1">
    <location>
        <begin position="465"/>
        <end position="485"/>
    </location>
</feature>
<feature type="transmembrane region" description="Helical" evidence="1">
    <location>
        <begin position="496"/>
        <end position="516"/>
    </location>
</feature>
<evidence type="ECO:0000255" key="1">
    <source>
        <dbReference type="HAMAP-Rule" id="MF_01426"/>
    </source>
</evidence>
<reference key="1">
    <citation type="journal article" date="2008" name="PLoS Genet.">
        <title>Complete genome sequence of the N2-fixing broad host range endophyte Klebsiella pneumoniae 342 and virulence predictions verified in mice.</title>
        <authorList>
            <person name="Fouts D.E."/>
            <person name="Tyler H.L."/>
            <person name="DeBoy R.T."/>
            <person name="Daugherty S."/>
            <person name="Ren Q."/>
            <person name="Badger J.H."/>
            <person name="Durkin A.S."/>
            <person name="Huot H."/>
            <person name="Shrivastava S."/>
            <person name="Kothari S."/>
            <person name="Dodson R.J."/>
            <person name="Mohamoud Y."/>
            <person name="Khouri H."/>
            <person name="Roesch L.F.W."/>
            <person name="Krogfelt K.A."/>
            <person name="Struve C."/>
            <person name="Triplett E.W."/>
            <person name="Methe B.A."/>
        </authorList>
    </citation>
    <scope>NUCLEOTIDE SEQUENCE [LARGE SCALE GENOMIC DNA]</scope>
    <source>
        <strain>342</strain>
    </source>
</reference>
<organism>
    <name type="scientific">Klebsiella pneumoniae (strain 342)</name>
    <dbReference type="NCBI Taxonomy" id="507522"/>
    <lineage>
        <taxon>Bacteria</taxon>
        <taxon>Pseudomonadati</taxon>
        <taxon>Pseudomonadota</taxon>
        <taxon>Gammaproteobacteria</taxon>
        <taxon>Enterobacterales</taxon>
        <taxon>Enterobacteriaceae</taxon>
        <taxon>Klebsiella/Raoultella group</taxon>
        <taxon>Klebsiella</taxon>
        <taxon>Klebsiella pneumoniae complex</taxon>
    </lineage>
</organism>
<accession>B5XXT7</accession>
<protein>
    <recommendedName>
        <fullName evidence="1">Cation/acetate symporter ActP</fullName>
    </recommendedName>
    <alternativeName>
        <fullName evidence="1">Acetate permease</fullName>
    </alternativeName>
    <alternativeName>
        <fullName evidence="1">Acetate transporter ActP</fullName>
    </alternativeName>
</protein>